<evidence type="ECO:0000255" key="1"/>
<evidence type="ECO:0000256" key="2">
    <source>
        <dbReference type="SAM" id="MobiDB-lite"/>
    </source>
</evidence>
<evidence type="ECO:0000305" key="3"/>
<reference key="1">
    <citation type="journal article" date="2001" name="Mol. Genet. Genomics">
        <title>Genetic and molecular features of Su(P), a gene that interacts with ref(2)P in male fertility of Drosophila melanogaster.</title>
        <authorList>
            <person name="Bichon A."/>
            <person name="Boukhatem N."/>
            <person name="Gay P."/>
            <person name="Dru P."/>
            <person name="Terzian H."/>
            <person name="Petitjean A.-M."/>
            <person name="Lemeunier F."/>
            <person name="Contamine D."/>
        </authorList>
    </citation>
    <scope>NUCLEOTIDE SEQUENCE [GENOMIC DNA]</scope>
</reference>
<reference key="2">
    <citation type="journal article" date="2007" name="Nature">
        <title>Evolution of genes and genomes on the Drosophila phylogeny.</title>
        <authorList>
            <consortium name="Drosophila 12 genomes consortium"/>
        </authorList>
    </citation>
    <scope>NUCLEOTIDE SEQUENCE [LARGE SCALE GENOMIC DNA]</scope>
    <source>
        <strain>Tucson 14021-0224.01</strain>
    </source>
</reference>
<accession>Q9U5Y0</accession>
<accession>B3NDJ6</accession>
<protein>
    <recommendedName>
        <fullName>Protein anon-73B1</fullName>
    </recommendedName>
</protein>
<feature type="chain" id="PRO_0000194181" description="Protein anon-73B1">
    <location>
        <begin position="1"/>
        <end position="87"/>
    </location>
</feature>
<feature type="transmembrane region" description="Helical" evidence="1">
    <location>
        <begin position="25"/>
        <end position="47"/>
    </location>
</feature>
<feature type="region of interest" description="Disordered" evidence="2">
    <location>
        <begin position="52"/>
        <end position="87"/>
    </location>
</feature>
<feature type="compositionally biased region" description="Basic and acidic residues" evidence="2">
    <location>
        <begin position="63"/>
        <end position="72"/>
    </location>
</feature>
<feature type="compositionally biased region" description="Basic residues" evidence="2">
    <location>
        <begin position="73"/>
        <end position="87"/>
    </location>
</feature>
<gene>
    <name type="ORF">GG13569</name>
</gene>
<organism>
    <name type="scientific">Drosophila erecta</name>
    <name type="common">Fruit fly</name>
    <dbReference type="NCBI Taxonomy" id="7220"/>
    <lineage>
        <taxon>Eukaryota</taxon>
        <taxon>Metazoa</taxon>
        <taxon>Ecdysozoa</taxon>
        <taxon>Arthropoda</taxon>
        <taxon>Hexapoda</taxon>
        <taxon>Insecta</taxon>
        <taxon>Pterygota</taxon>
        <taxon>Neoptera</taxon>
        <taxon>Endopterygota</taxon>
        <taxon>Diptera</taxon>
        <taxon>Brachycera</taxon>
        <taxon>Muscomorpha</taxon>
        <taxon>Ephydroidea</taxon>
        <taxon>Drosophilidae</taxon>
        <taxon>Drosophila</taxon>
        <taxon>Sophophora</taxon>
    </lineage>
</organism>
<comment type="subcellular location">
    <subcellularLocation>
        <location evidence="3">Membrane</location>
        <topology evidence="3">Single-pass membrane protein</topology>
    </subcellularLocation>
</comment>
<comment type="similarity">
    <text evidence="3">Belongs to the UPF0239 family.</text>
</comment>
<keyword id="KW-0472">Membrane</keyword>
<keyword id="KW-0812">Transmembrane</keyword>
<keyword id="KW-1133">Transmembrane helix</keyword>
<dbReference type="EMBL" id="AJ250309">
    <property type="protein sequence ID" value="CAB58342.1"/>
    <property type="molecule type" value="Genomic_DNA"/>
</dbReference>
<dbReference type="EMBL" id="CH954178">
    <property type="protein sequence ID" value="EDV52058.1"/>
    <property type="molecule type" value="Genomic_DNA"/>
</dbReference>
<dbReference type="EnsemblMetazoa" id="FBtr0133623">
    <property type="protein sequence ID" value="FBpp0132115"/>
    <property type="gene ID" value="FBgn0028459"/>
</dbReference>
<dbReference type="EnsemblMetazoa" id="XM_001972996.3">
    <property type="protein sequence ID" value="XP_001973032.1"/>
    <property type="gene ID" value="LOC6544216"/>
</dbReference>
<dbReference type="GeneID" id="6544216"/>
<dbReference type="KEGG" id="der:6544216"/>
<dbReference type="eggNOG" id="ENOG502S6QI">
    <property type="taxonomic scope" value="Eukaryota"/>
</dbReference>
<dbReference type="HOGENOM" id="CLU_189363_0_0_1"/>
<dbReference type="OMA" id="FQMVCLA"/>
<dbReference type="OrthoDB" id="10040809at2759"/>
<dbReference type="PhylomeDB" id="Q9U5Y0"/>
<dbReference type="Proteomes" id="UP000008711">
    <property type="component" value="Unassembled WGS sequence"/>
</dbReference>
<dbReference type="GO" id="GO:0016020">
    <property type="term" value="C:membrane"/>
    <property type="evidence" value="ECO:0007669"/>
    <property type="project" value="UniProtKB-SubCell"/>
</dbReference>
<dbReference type="InterPro" id="IPR009621">
    <property type="entry name" value="UPF0239"/>
</dbReference>
<dbReference type="PANTHER" id="PTHR14409">
    <property type="entry name" value="MANNOSIDASE, BETA A, LYSOSOMAL-LIKE, MANBAL PROTEIN"/>
    <property type="match status" value="1"/>
</dbReference>
<dbReference type="PANTHER" id="PTHR14409:SF0">
    <property type="entry name" value="PROTEIN MANBAL"/>
    <property type="match status" value="1"/>
</dbReference>
<dbReference type="Pfam" id="PF06783">
    <property type="entry name" value="UPF0239"/>
    <property type="match status" value="1"/>
</dbReference>
<proteinExistence type="inferred from homology"/>
<sequence>MSASADSLAAAASLDKYGDEDIFSLLIRYGLYVGALFQFVCISAAVLMENNPDVNSNPETGEVTEREGEPVRTRLHKIRKLEKKKRR</sequence>
<name>U239_DROER</name>